<protein>
    <recommendedName>
        <fullName evidence="1">Phosphate acyltransferase</fullName>
        <ecNumber evidence="1">2.3.1.274</ecNumber>
    </recommendedName>
    <alternativeName>
        <fullName evidence="1">Acyl-ACP phosphotransacylase</fullName>
    </alternativeName>
    <alternativeName>
        <fullName evidence="1">Acyl-[acyl-carrier-protein]--phosphate acyltransferase</fullName>
    </alternativeName>
    <alternativeName>
        <fullName evidence="1">Phosphate-acyl-ACP acyltransferase</fullName>
    </alternativeName>
</protein>
<organism>
    <name type="scientific">Streptococcus thermophilus (strain ATCC BAA-250 / LMG 18311)</name>
    <dbReference type="NCBI Taxonomy" id="264199"/>
    <lineage>
        <taxon>Bacteria</taxon>
        <taxon>Bacillati</taxon>
        <taxon>Bacillota</taxon>
        <taxon>Bacilli</taxon>
        <taxon>Lactobacillales</taxon>
        <taxon>Streptococcaceae</taxon>
        <taxon>Streptococcus</taxon>
    </lineage>
</organism>
<reference key="1">
    <citation type="journal article" date="2004" name="Nat. Biotechnol.">
        <title>Complete sequence and comparative genome analysis of the dairy bacterium Streptococcus thermophilus.</title>
        <authorList>
            <person name="Bolotin A."/>
            <person name="Quinquis B."/>
            <person name="Renault P."/>
            <person name="Sorokin A."/>
            <person name="Ehrlich S.D."/>
            <person name="Kulakauskas S."/>
            <person name="Lapidus A."/>
            <person name="Goltsman E."/>
            <person name="Mazur M."/>
            <person name="Pusch G.D."/>
            <person name="Fonstein M."/>
            <person name="Overbeek R."/>
            <person name="Kyprides N."/>
            <person name="Purnelle B."/>
            <person name="Prozzi D."/>
            <person name="Ngui K."/>
            <person name="Masuy D."/>
            <person name="Hancy F."/>
            <person name="Burteau S."/>
            <person name="Boutry M."/>
            <person name="Delcour J."/>
            <person name="Goffeau A."/>
            <person name="Hols P."/>
        </authorList>
    </citation>
    <scope>NUCLEOTIDE SEQUENCE [LARGE SCALE GENOMIC DNA]</scope>
    <source>
        <strain>ATCC BAA-250 / LMG 18311</strain>
    </source>
</reference>
<evidence type="ECO:0000255" key="1">
    <source>
        <dbReference type="HAMAP-Rule" id="MF_00019"/>
    </source>
</evidence>
<sequence length="334" mass="35530">MHVIAVDAMGGDNAPQAIVEGVNQALAEFKDIEIQLYGDEAKIKNYLIANERVSIVHTDEKINSDDEPVKAIRKKKKASMVLGAQAVKEKAADAVISAGNTGALLAAGLFVVGRIKGVERPGLMSTMPSFTGQPFDMLDLGANAENTANHLHQYAILGSFYAKNVRGIATPRVGLLNNGTEKTKGDSLRKEAFELLSQEASINFIGNVEAREIMSGAADVVVADGFTGNAVLKAIEGTGLGTMKTLKSAIMNGGLKAKLGAFLLKDRLKGMKETMDYSSAGGAVLFGLKAPVVKCHGSSDAKAVYYTIKQVRKMLDTKVVEQLVDAFDPKEEVN</sequence>
<name>PLSX_STRT2</name>
<dbReference type="EC" id="2.3.1.274" evidence="1"/>
<dbReference type="EMBL" id="CP000023">
    <property type="protein sequence ID" value="AAV59758.1"/>
    <property type="molecule type" value="Genomic_DNA"/>
</dbReference>
<dbReference type="RefSeq" id="WP_011225258.1">
    <property type="nucleotide sequence ID" value="NC_006448.1"/>
</dbReference>
<dbReference type="SMR" id="Q5M6K0"/>
<dbReference type="STRING" id="264199.stu0028"/>
<dbReference type="GeneID" id="66897948"/>
<dbReference type="KEGG" id="stl:stu0028"/>
<dbReference type="PATRIC" id="fig|264199.4.peg.30"/>
<dbReference type="eggNOG" id="COG0416">
    <property type="taxonomic scope" value="Bacteria"/>
</dbReference>
<dbReference type="HOGENOM" id="CLU_039379_1_1_9"/>
<dbReference type="UniPathway" id="UPA00085"/>
<dbReference type="Proteomes" id="UP000001170">
    <property type="component" value="Chromosome"/>
</dbReference>
<dbReference type="GO" id="GO:0005737">
    <property type="term" value="C:cytoplasm"/>
    <property type="evidence" value="ECO:0007669"/>
    <property type="project" value="UniProtKB-SubCell"/>
</dbReference>
<dbReference type="GO" id="GO:0043811">
    <property type="term" value="F:phosphate:acyl-[acyl carrier protein] acyltransferase activity"/>
    <property type="evidence" value="ECO:0007669"/>
    <property type="project" value="UniProtKB-UniRule"/>
</dbReference>
<dbReference type="GO" id="GO:0006633">
    <property type="term" value="P:fatty acid biosynthetic process"/>
    <property type="evidence" value="ECO:0007669"/>
    <property type="project" value="UniProtKB-UniRule"/>
</dbReference>
<dbReference type="GO" id="GO:0008654">
    <property type="term" value="P:phospholipid biosynthetic process"/>
    <property type="evidence" value="ECO:0007669"/>
    <property type="project" value="UniProtKB-KW"/>
</dbReference>
<dbReference type="Gene3D" id="3.40.718.10">
    <property type="entry name" value="Isopropylmalate Dehydrogenase"/>
    <property type="match status" value="1"/>
</dbReference>
<dbReference type="HAMAP" id="MF_00019">
    <property type="entry name" value="PlsX"/>
    <property type="match status" value="1"/>
</dbReference>
<dbReference type="InterPro" id="IPR003664">
    <property type="entry name" value="FA_synthesis"/>
</dbReference>
<dbReference type="InterPro" id="IPR012281">
    <property type="entry name" value="Phospholipid_synth_PlsX-like"/>
</dbReference>
<dbReference type="NCBIfam" id="TIGR00182">
    <property type="entry name" value="plsX"/>
    <property type="match status" value="1"/>
</dbReference>
<dbReference type="PANTHER" id="PTHR30100">
    <property type="entry name" value="FATTY ACID/PHOSPHOLIPID SYNTHESIS PROTEIN PLSX"/>
    <property type="match status" value="1"/>
</dbReference>
<dbReference type="PANTHER" id="PTHR30100:SF1">
    <property type="entry name" value="PHOSPHATE ACYLTRANSFERASE"/>
    <property type="match status" value="1"/>
</dbReference>
<dbReference type="Pfam" id="PF02504">
    <property type="entry name" value="FA_synthesis"/>
    <property type="match status" value="1"/>
</dbReference>
<dbReference type="PIRSF" id="PIRSF002465">
    <property type="entry name" value="Phsphlp_syn_PlsX"/>
    <property type="match status" value="1"/>
</dbReference>
<dbReference type="SUPFAM" id="SSF53659">
    <property type="entry name" value="Isocitrate/Isopropylmalate dehydrogenase-like"/>
    <property type="match status" value="1"/>
</dbReference>
<proteinExistence type="inferred from homology"/>
<accession>Q5M6K0</accession>
<keyword id="KW-0963">Cytoplasm</keyword>
<keyword id="KW-0444">Lipid biosynthesis</keyword>
<keyword id="KW-0443">Lipid metabolism</keyword>
<keyword id="KW-0594">Phospholipid biosynthesis</keyword>
<keyword id="KW-1208">Phospholipid metabolism</keyword>
<keyword id="KW-1185">Reference proteome</keyword>
<keyword id="KW-0808">Transferase</keyword>
<feature type="chain" id="PRO_1000001849" description="Phosphate acyltransferase">
    <location>
        <begin position="1"/>
        <end position="334"/>
    </location>
</feature>
<gene>
    <name evidence="1" type="primary">plsX</name>
    <name type="ordered locus">stu0028</name>
</gene>
<comment type="function">
    <text evidence="1">Catalyzes the reversible formation of acyl-phosphate (acyl-PO(4)) from acyl-[acyl-carrier-protein] (acyl-ACP). This enzyme utilizes acyl-ACP as fatty acyl donor, but not acyl-CoA.</text>
</comment>
<comment type="catalytic activity">
    <reaction evidence="1">
        <text>a fatty acyl-[ACP] + phosphate = an acyl phosphate + holo-[ACP]</text>
        <dbReference type="Rhea" id="RHEA:42292"/>
        <dbReference type="Rhea" id="RHEA-COMP:9685"/>
        <dbReference type="Rhea" id="RHEA-COMP:14125"/>
        <dbReference type="ChEBI" id="CHEBI:43474"/>
        <dbReference type="ChEBI" id="CHEBI:59918"/>
        <dbReference type="ChEBI" id="CHEBI:64479"/>
        <dbReference type="ChEBI" id="CHEBI:138651"/>
        <dbReference type="EC" id="2.3.1.274"/>
    </reaction>
</comment>
<comment type="pathway">
    <text evidence="1">Lipid metabolism; phospholipid metabolism.</text>
</comment>
<comment type="subunit">
    <text evidence="1">Homodimer. Probably interacts with PlsY.</text>
</comment>
<comment type="subcellular location">
    <subcellularLocation>
        <location evidence="1">Cytoplasm</location>
    </subcellularLocation>
    <text evidence="1">Associated with the membrane possibly through PlsY.</text>
</comment>
<comment type="similarity">
    <text evidence="1">Belongs to the PlsX family.</text>
</comment>